<accession>Q5HE49</accession>
<sequence length="601" mass="65850">MCGIVGYIGYDNAKELLLKGLEKLEYRGYDSAGIAVVNDDNTTVFKEKGRIAELRKVADSSDFDGPVGIGHTRWATHGVPNHENSHPHQSSNGRFTLVHNGVIENYEELKGEYLQGVSFISETDTEVIVQLVEYFSNQGLSTEEAFTKVVSLLHGSYALGLLDAEDKDTIYVAKNKSPLLLGVGEGFNVIASDALAMLQVTSEYKEIHDHEIVIVKKDEVIIKDADGNVVERDSYIAEIDASDAEKGVYAHYMLKEIHEQPAVMRRIIQEYQDAEGNLKIDQDIINDVKEADRIYVIAAGTSYHAGLVGKEFLEKWAGVPTEVHVASEFVYNMPLLSEKPLFVYISQSGETADSRAVLVETNKLGHKSLTITNVAGSTLSREADHTLLLHAGPEIAVASTKAYTAQIAVLSILSQIVAKEHGREADIDLLRELAKVTTAIEAIVDDAPIMEQIATDFLETTRNAFFIGRTIDYNVSLEGALKLKEISYIQAEGFAGGELKHGTIALIEEGTPVVGLATQEKVNLSIRGNVKEVVARGAHPCIISMEGLEKEGDTYVIPHVHELLTPLVSVVALQLISYYAALHRDLDVDKPRNLAKSVTVE</sequence>
<gene>
    <name evidence="1" type="primary">glmS</name>
    <name type="ordered locus">SACOL2145</name>
</gene>
<comment type="function">
    <text evidence="1">Catalyzes the first step in hexosamine metabolism, converting fructose-6P into glucosamine-6P using glutamine as a nitrogen source.</text>
</comment>
<comment type="catalytic activity">
    <reaction evidence="1">
        <text>D-fructose 6-phosphate + L-glutamine = D-glucosamine 6-phosphate + L-glutamate</text>
        <dbReference type="Rhea" id="RHEA:13237"/>
        <dbReference type="ChEBI" id="CHEBI:29985"/>
        <dbReference type="ChEBI" id="CHEBI:58359"/>
        <dbReference type="ChEBI" id="CHEBI:58725"/>
        <dbReference type="ChEBI" id="CHEBI:61527"/>
        <dbReference type="EC" id="2.6.1.16"/>
    </reaction>
</comment>
<comment type="subunit">
    <text evidence="1">Homodimer.</text>
</comment>
<comment type="subcellular location">
    <subcellularLocation>
        <location evidence="1">Cytoplasm</location>
    </subcellularLocation>
</comment>
<organism>
    <name type="scientific">Staphylococcus aureus (strain COL)</name>
    <dbReference type="NCBI Taxonomy" id="93062"/>
    <lineage>
        <taxon>Bacteria</taxon>
        <taxon>Bacillati</taxon>
        <taxon>Bacillota</taxon>
        <taxon>Bacilli</taxon>
        <taxon>Bacillales</taxon>
        <taxon>Staphylococcaceae</taxon>
        <taxon>Staphylococcus</taxon>
    </lineage>
</organism>
<reference key="1">
    <citation type="journal article" date="2005" name="J. Bacteriol.">
        <title>Insights on evolution of virulence and resistance from the complete genome analysis of an early methicillin-resistant Staphylococcus aureus strain and a biofilm-producing methicillin-resistant Staphylococcus epidermidis strain.</title>
        <authorList>
            <person name="Gill S.R."/>
            <person name="Fouts D.E."/>
            <person name="Archer G.L."/>
            <person name="Mongodin E.F."/>
            <person name="DeBoy R.T."/>
            <person name="Ravel J."/>
            <person name="Paulsen I.T."/>
            <person name="Kolonay J.F."/>
            <person name="Brinkac L.M."/>
            <person name="Beanan M.J."/>
            <person name="Dodson R.J."/>
            <person name="Daugherty S.C."/>
            <person name="Madupu R."/>
            <person name="Angiuoli S.V."/>
            <person name="Durkin A.S."/>
            <person name="Haft D.H."/>
            <person name="Vamathevan J.J."/>
            <person name="Khouri H."/>
            <person name="Utterback T.R."/>
            <person name="Lee C."/>
            <person name="Dimitrov G."/>
            <person name="Jiang L."/>
            <person name="Qin H."/>
            <person name="Weidman J."/>
            <person name="Tran K."/>
            <person name="Kang K.H."/>
            <person name="Hance I.R."/>
            <person name="Nelson K.E."/>
            <person name="Fraser C.M."/>
        </authorList>
    </citation>
    <scope>NUCLEOTIDE SEQUENCE [LARGE SCALE GENOMIC DNA]</scope>
    <source>
        <strain>COL</strain>
    </source>
</reference>
<evidence type="ECO:0000255" key="1">
    <source>
        <dbReference type="HAMAP-Rule" id="MF_00164"/>
    </source>
</evidence>
<dbReference type="EC" id="2.6.1.16" evidence="1"/>
<dbReference type="EMBL" id="CP000046">
    <property type="protein sequence ID" value="AAW38453.1"/>
    <property type="molecule type" value="Genomic_DNA"/>
</dbReference>
<dbReference type="RefSeq" id="WP_000334465.1">
    <property type="nucleotide sequence ID" value="NZ_JBGOFO010000007.1"/>
</dbReference>
<dbReference type="SMR" id="Q5HE49"/>
<dbReference type="KEGG" id="sac:SACOL2145"/>
<dbReference type="HOGENOM" id="CLU_012520_7_1_9"/>
<dbReference type="Proteomes" id="UP000000530">
    <property type="component" value="Chromosome"/>
</dbReference>
<dbReference type="GO" id="GO:0005829">
    <property type="term" value="C:cytosol"/>
    <property type="evidence" value="ECO:0007669"/>
    <property type="project" value="TreeGrafter"/>
</dbReference>
<dbReference type="GO" id="GO:0097367">
    <property type="term" value="F:carbohydrate derivative binding"/>
    <property type="evidence" value="ECO:0007669"/>
    <property type="project" value="InterPro"/>
</dbReference>
<dbReference type="GO" id="GO:0004360">
    <property type="term" value="F:glutamine-fructose-6-phosphate transaminase (isomerizing) activity"/>
    <property type="evidence" value="ECO:0007669"/>
    <property type="project" value="UniProtKB-UniRule"/>
</dbReference>
<dbReference type="GO" id="GO:0005975">
    <property type="term" value="P:carbohydrate metabolic process"/>
    <property type="evidence" value="ECO:0007669"/>
    <property type="project" value="UniProtKB-UniRule"/>
</dbReference>
<dbReference type="GO" id="GO:0006002">
    <property type="term" value="P:fructose 6-phosphate metabolic process"/>
    <property type="evidence" value="ECO:0007669"/>
    <property type="project" value="TreeGrafter"/>
</dbReference>
<dbReference type="GO" id="GO:0006487">
    <property type="term" value="P:protein N-linked glycosylation"/>
    <property type="evidence" value="ECO:0007669"/>
    <property type="project" value="TreeGrafter"/>
</dbReference>
<dbReference type="GO" id="GO:0006047">
    <property type="term" value="P:UDP-N-acetylglucosamine metabolic process"/>
    <property type="evidence" value="ECO:0007669"/>
    <property type="project" value="TreeGrafter"/>
</dbReference>
<dbReference type="CDD" id="cd00714">
    <property type="entry name" value="GFAT"/>
    <property type="match status" value="1"/>
</dbReference>
<dbReference type="CDD" id="cd05008">
    <property type="entry name" value="SIS_GlmS_GlmD_1"/>
    <property type="match status" value="1"/>
</dbReference>
<dbReference type="CDD" id="cd05009">
    <property type="entry name" value="SIS_GlmS_GlmD_2"/>
    <property type="match status" value="1"/>
</dbReference>
<dbReference type="FunFam" id="3.40.50.10490:FF:000001">
    <property type="entry name" value="Glutamine--fructose-6-phosphate aminotransferase [isomerizing]"/>
    <property type="match status" value="1"/>
</dbReference>
<dbReference type="FunFam" id="3.40.50.10490:FF:000022">
    <property type="entry name" value="Glutamine--fructose-6-phosphate aminotransferase [isomerizing]"/>
    <property type="match status" value="1"/>
</dbReference>
<dbReference type="FunFam" id="3.60.20.10:FF:000006">
    <property type="entry name" value="Glutamine--fructose-6-phosphate aminotransferase [isomerizing]"/>
    <property type="match status" value="1"/>
</dbReference>
<dbReference type="Gene3D" id="3.40.50.10490">
    <property type="entry name" value="Glucose-6-phosphate isomerase like protein, domain 1"/>
    <property type="match status" value="2"/>
</dbReference>
<dbReference type="Gene3D" id="3.60.20.10">
    <property type="entry name" value="Glutamine Phosphoribosylpyrophosphate, subunit 1, domain 1"/>
    <property type="match status" value="1"/>
</dbReference>
<dbReference type="HAMAP" id="MF_00164">
    <property type="entry name" value="GlmS"/>
    <property type="match status" value="1"/>
</dbReference>
<dbReference type="InterPro" id="IPR017932">
    <property type="entry name" value="GATase_2_dom"/>
</dbReference>
<dbReference type="InterPro" id="IPR005855">
    <property type="entry name" value="GFAT"/>
</dbReference>
<dbReference type="InterPro" id="IPR047084">
    <property type="entry name" value="GFAT_N"/>
</dbReference>
<dbReference type="InterPro" id="IPR035466">
    <property type="entry name" value="GlmS/AgaS_SIS"/>
</dbReference>
<dbReference type="InterPro" id="IPR035490">
    <property type="entry name" value="GlmS/FrlB_SIS"/>
</dbReference>
<dbReference type="InterPro" id="IPR029055">
    <property type="entry name" value="Ntn_hydrolases_N"/>
</dbReference>
<dbReference type="InterPro" id="IPR001347">
    <property type="entry name" value="SIS_dom"/>
</dbReference>
<dbReference type="InterPro" id="IPR046348">
    <property type="entry name" value="SIS_dom_sf"/>
</dbReference>
<dbReference type="NCBIfam" id="TIGR01135">
    <property type="entry name" value="glmS"/>
    <property type="match status" value="1"/>
</dbReference>
<dbReference type="NCBIfam" id="NF001484">
    <property type="entry name" value="PRK00331.1"/>
    <property type="match status" value="1"/>
</dbReference>
<dbReference type="PANTHER" id="PTHR10937">
    <property type="entry name" value="GLUCOSAMINE--FRUCTOSE-6-PHOSPHATE AMINOTRANSFERASE, ISOMERIZING"/>
    <property type="match status" value="1"/>
</dbReference>
<dbReference type="PANTHER" id="PTHR10937:SF0">
    <property type="entry name" value="GLUTAMINE--FRUCTOSE-6-PHOSPHATE TRANSAMINASE (ISOMERIZING)"/>
    <property type="match status" value="1"/>
</dbReference>
<dbReference type="Pfam" id="PF13522">
    <property type="entry name" value="GATase_6"/>
    <property type="match status" value="1"/>
</dbReference>
<dbReference type="Pfam" id="PF01380">
    <property type="entry name" value="SIS"/>
    <property type="match status" value="2"/>
</dbReference>
<dbReference type="SUPFAM" id="SSF56235">
    <property type="entry name" value="N-terminal nucleophile aminohydrolases (Ntn hydrolases)"/>
    <property type="match status" value="1"/>
</dbReference>
<dbReference type="SUPFAM" id="SSF53697">
    <property type="entry name" value="SIS domain"/>
    <property type="match status" value="1"/>
</dbReference>
<dbReference type="PROSITE" id="PS51278">
    <property type="entry name" value="GATASE_TYPE_2"/>
    <property type="match status" value="1"/>
</dbReference>
<dbReference type="PROSITE" id="PS51464">
    <property type="entry name" value="SIS"/>
    <property type="match status" value="2"/>
</dbReference>
<proteinExistence type="inferred from homology"/>
<protein>
    <recommendedName>
        <fullName evidence="1">Glutamine--fructose-6-phosphate aminotransferase [isomerizing]</fullName>
        <ecNumber evidence="1">2.6.1.16</ecNumber>
    </recommendedName>
    <alternativeName>
        <fullName evidence="1">D-fructose-6-phosphate amidotransferase</fullName>
    </alternativeName>
    <alternativeName>
        <fullName evidence="1">GFAT</fullName>
    </alternativeName>
    <alternativeName>
        <fullName evidence="1">Glucosamine-6-phosphate synthase</fullName>
    </alternativeName>
    <alternativeName>
        <fullName evidence="1">Hexosephosphate aminotransferase</fullName>
    </alternativeName>
    <alternativeName>
        <fullName evidence="1">L-glutamine--D-fructose-6-phosphate amidotransferase</fullName>
    </alternativeName>
</protein>
<keyword id="KW-0032">Aminotransferase</keyword>
<keyword id="KW-0963">Cytoplasm</keyword>
<keyword id="KW-0315">Glutamine amidotransferase</keyword>
<keyword id="KW-0677">Repeat</keyword>
<keyword id="KW-0808">Transferase</keyword>
<name>GLMS_STAAC</name>
<feature type="initiator methionine" description="Removed" evidence="1">
    <location>
        <position position="1"/>
    </location>
</feature>
<feature type="chain" id="PRO_0000135379" description="Glutamine--fructose-6-phosphate aminotransferase [isomerizing]">
    <location>
        <begin position="2"/>
        <end position="601"/>
    </location>
</feature>
<feature type="domain" description="Glutamine amidotransferase type-2" evidence="1">
    <location>
        <begin position="2"/>
        <end position="218"/>
    </location>
</feature>
<feature type="domain" description="SIS 1" evidence="1">
    <location>
        <begin position="284"/>
        <end position="423"/>
    </location>
</feature>
<feature type="domain" description="SIS 2" evidence="1">
    <location>
        <begin position="453"/>
        <end position="591"/>
    </location>
</feature>
<feature type="active site" description="Nucleophile; for GATase activity" evidence="1">
    <location>
        <position position="2"/>
    </location>
</feature>
<feature type="active site" description="For Fru-6P isomerization activity" evidence="1">
    <location>
        <position position="596"/>
    </location>
</feature>